<gene>
    <name type="ORF">GH14907</name>
</gene>
<feature type="transit peptide" description="Mitochondrion" evidence="1">
    <location>
        <begin position="1"/>
        <end position="26"/>
    </location>
</feature>
<feature type="chain" id="PRO_0000388063" description="Ubiquinone biosynthesis protein COQ4 homolog, mitochondrial">
    <location>
        <begin position="27"/>
        <end position="264"/>
    </location>
</feature>
<feature type="binding site" evidence="1">
    <location>
        <position position="169"/>
    </location>
    <ligand>
        <name>Zn(2+)</name>
        <dbReference type="ChEBI" id="CHEBI:29105"/>
    </ligand>
</feature>
<feature type="binding site" evidence="1">
    <location>
        <position position="170"/>
    </location>
    <ligand>
        <name>Zn(2+)</name>
        <dbReference type="ChEBI" id="CHEBI:29105"/>
    </ligand>
</feature>
<feature type="binding site" evidence="1">
    <location>
        <position position="173"/>
    </location>
    <ligand>
        <name>Zn(2+)</name>
        <dbReference type="ChEBI" id="CHEBI:29105"/>
    </ligand>
</feature>
<feature type="binding site" evidence="1">
    <location>
        <position position="185"/>
    </location>
    <ligand>
        <name>Zn(2+)</name>
        <dbReference type="ChEBI" id="CHEBI:29105"/>
    </ligand>
</feature>
<reference key="1">
    <citation type="journal article" date="2007" name="Nature">
        <title>Evolution of genes and genomes on the Drosophila phylogeny.</title>
        <authorList>
            <consortium name="Drosophila 12 genomes consortium"/>
        </authorList>
    </citation>
    <scope>NUCLEOTIDE SEQUENCE [LARGE SCALE GENOMIC DNA]</scope>
    <source>
        <strain>Tucson 15287-2541.00</strain>
    </source>
</reference>
<sequence>MMQRCWQISLPLARRRLIPSLTSKRTAATEAPLDELDAFEREYLKQRIQITPFQRLLLGAGSSLASLLDPHRHDMIACLGETTGENALWNILDTMQASEEGRRILVEKPRINTRTIDLKRLEAMPPDTFGATYAKFLKDNNVTPDTRMEVHFLDDPKLAYVMTRYRECHDLVHAVLNMPTNMLCEVTVKWVEALNTGLPMCYGGAVFGAVRLRPKQRREYLRRYLPWAIENSKQMKPLMPIYWERRWEQNVDELRNELGIKLLQ</sequence>
<comment type="function">
    <text evidence="1">Lyase that catalyzes the C1-decarboxylation of 4-hydroxy-3-methoxy-5-(all-trans-polyprenyl)benzoic acid into 2-methoxy-6-(all-trans-polyprenyl)phenol during ubiquinone biosynthesis.</text>
</comment>
<comment type="catalytic activity">
    <reaction evidence="1">
        <text>a 4-hydroxy-3-methoxy-5-(all-trans-polyprenyl)benzoate + H(+) = a 2-methoxy-6-(all-trans-polyprenyl)phenol + CO2</text>
        <dbReference type="Rhea" id="RHEA:81179"/>
        <dbReference type="Rhea" id="RHEA-COMP:9551"/>
        <dbReference type="Rhea" id="RHEA-COMP:10931"/>
        <dbReference type="ChEBI" id="CHEBI:15378"/>
        <dbReference type="ChEBI" id="CHEBI:16526"/>
        <dbReference type="ChEBI" id="CHEBI:62731"/>
        <dbReference type="ChEBI" id="CHEBI:84443"/>
        <dbReference type="EC" id="4.1.1.130"/>
    </reaction>
</comment>
<comment type="cofactor">
    <cofactor evidence="1">
        <name>Zn(2+)</name>
        <dbReference type="ChEBI" id="CHEBI:29105"/>
    </cofactor>
</comment>
<comment type="pathway">
    <text evidence="1">Cofactor biosynthesis; ubiquinone biosynthesis.</text>
</comment>
<comment type="subunit">
    <text evidence="1">Component of a multi-subunit COQ enzyme complex.</text>
</comment>
<comment type="subcellular location">
    <subcellularLocation>
        <location evidence="1">Mitochondrion inner membrane</location>
        <topology evidence="1">Peripheral membrane protein</topology>
        <orientation evidence="1">Matrix side</orientation>
    </subcellularLocation>
</comment>
<comment type="similarity">
    <text evidence="1">Belongs to the COQ4 family.</text>
</comment>
<dbReference type="EC" id="4.1.1.130" evidence="1"/>
<dbReference type="EMBL" id="CH916366">
    <property type="protein sequence ID" value="EDV97003.1"/>
    <property type="molecule type" value="Genomic_DNA"/>
</dbReference>
<dbReference type="SMR" id="B4J252"/>
<dbReference type="FunCoup" id="B4J252">
    <property type="interactions" value="725"/>
</dbReference>
<dbReference type="STRING" id="7222.B4J252"/>
<dbReference type="EnsemblMetazoa" id="FBtr0150321">
    <property type="protein sequence ID" value="FBpp0148813"/>
    <property type="gene ID" value="FBgn0122382"/>
</dbReference>
<dbReference type="EnsemblMetazoa" id="XM_001984619.3">
    <property type="protein sequence ID" value="XP_001984655.1"/>
    <property type="gene ID" value="LOC6557989"/>
</dbReference>
<dbReference type="EnsemblMetazoa" id="XM_043215301.1">
    <property type="protein sequence ID" value="XP_043071236.1"/>
    <property type="gene ID" value="LOC6557989"/>
</dbReference>
<dbReference type="GeneID" id="6557989"/>
<dbReference type="KEGG" id="dgr:6557989"/>
<dbReference type="eggNOG" id="KOG3244">
    <property type="taxonomic scope" value="Eukaryota"/>
</dbReference>
<dbReference type="HOGENOM" id="CLU_061241_1_1_1"/>
<dbReference type="InParanoid" id="B4J252"/>
<dbReference type="OMA" id="YYERHFH"/>
<dbReference type="OrthoDB" id="4249at2759"/>
<dbReference type="PhylomeDB" id="B4J252"/>
<dbReference type="UniPathway" id="UPA00232"/>
<dbReference type="Proteomes" id="UP000001070">
    <property type="component" value="Unassembled WGS sequence"/>
</dbReference>
<dbReference type="GO" id="GO:0031314">
    <property type="term" value="C:extrinsic component of mitochondrial inner membrane"/>
    <property type="evidence" value="ECO:0007669"/>
    <property type="project" value="UniProtKB-UniRule"/>
</dbReference>
<dbReference type="GO" id="GO:0006744">
    <property type="term" value="P:ubiquinone biosynthetic process"/>
    <property type="evidence" value="ECO:0007669"/>
    <property type="project" value="UniProtKB-UniRule"/>
</dbReference>
<dbReference type="HAMAP" id="MF_03111">
    <property type="entry name" value="Coq4"/>
    <property type="match status" value="1"/>
</dbReference>
<dbReference type="InterPro" id="IPR007715">
    <property type="entry name" value="Coq4"/>
</dbReference>
<dbReference type="InterPro" id="IPR027540">
    <property type="entry name" value="Coq4_euk"/>
</dbReference>
<dbReference type="PANTHER" id="PTHR12922">
    <property type="entry name" value="UBIQUINONE BIOSYNTHESIS PROTEIN"/>
    <property type="match status" value="1"/>
</dbReference>
<dbReference type="PANTHER" id="PTHR12922:SF7">
    <property type="entry name" value="UBIQUINONE BIOSYNTHESIS PROTEIN COQ4 HOMOLOG, MITOCHONDRIAL"/>
    <property type="match status" value="1"/>
</dbReference>
<dbReference type="Pfam" id="PF05019">
    <property type="entry name" value="Coq4"/>
    <property type="match status" value="1"/>
</dbReference>
<keyword id="KW-0456">Lyase</keyword>
<keyword id="KW-0472">Membrane</keyword>
<keyword id="KW-0479">Metal-binding</keyword>
<keyword id="KW-0496">Mitochondrion</keyword>
<keyword id="KW-0999">Mitochondrion inner membrane</keyword>
<keyword id="KW-1185">Reference proteome</keyword>
<keyword id="KW-0809">Transit peptide</keyword>
<keyword id="KW-0831">Ubiquinone biosynthesis</keyword>
<keyword id="KW-0862">Zinc</keyword>
<name>COQ4_DROGR</name>
<accession>B4J252</accession>
<proteinExistence type="inferred from homology"/>
<organism>
    <name type="scientific">Drosophila grimshawi</name>
    <name type="common">Hawaiian fruit fly</name>
    <name type="synonym">Idiomyia grimshawi</name>
    <dbReference type="NCBI Taxonomy" id="7222"/>
    <lineage>
        <taxon>Eukaryota</taxon>
        <taxon>Metazoa</taxon>
        <taxon>Ecdysozoa</taxon>
        <taxon>Arthropoda</taxon>
        <taxon>Hexapoda</taxon>
        <taxon>Insecta</taxon>
        <taxon>Pterygota</taxon>
        <taxon>Neoptera</taxon>
        <taxon>Endopterygota</taxon>
        <taxon>Diptera</taxon>
        <taxon>Brachycera</taxon>
        <taxon>Muscomorpha</taxon>
        <taxon>Ephydroidea</taxon>
        <taxon>Drosophilidae</taxon>
        <taxon>Drosophila</taxon>
        <taxon>Hawaiian Drosophila</taxon>
    </lineage>
</organism>
<protein>
    <recommendedName>
        <fullName evidence="1">Ubiquinone biosynthesis protein COQ4 homolog, mitochondrial</fullName>
    </recommendedName>
    <alternativeName>
        <fullName>4-hydroxy-3-methoxy-5-polyprenylbenzoate decarboxylase</fullName>
        <ecNumber evidence="1">4.1.1.130</ecNumber>
    </alternativeName>
    <alternativeName>
        <fullName evidence="1">Coenzyme Q biosynthesis protein 4 homolog</fullName>
    </alternativeName>
</protein>
<evidence type="ECO:0000255" key="1">
    <source>
        <dbReference type="HAMAP-Rule" id="MF_03111"/>
    </source>
</evidence>